<evidence type="ECO:0000255" key="1">
    <source>
        <dbReference type="HAMAP-Rule" id="MF_00210"/>
    </source>
</evidence>
<comment type="function">
    <text evidence="1">Catalyzes the transfer of the enolpyruvyl moiety of phosphoenolpyruvate (PEP) to the 5-hydroxyl of shikimate-3-phosphate (S3P) to produce enolpyruvyl shikimate-3-phosphate and inorganic phosphate.</text>
</comment>
<comment type="catalytic activity">
    <reaction evidence="1">
        <text>3-phosphoshikimate + phosphoenolpyruvate = 5-O-(1-carboxyvinyl)-3-phosphoshikimate + phosphate</text>
        <dbReference type="Rhea" id="RHEA:21256"/>
        <dbReference type="ChEBI" id="CHEBI:43474"/>
        <dbReference type="ChEBI" id="CHEBI:57701"/>
        <dbReference type="ChEBI" id="CHEBI:58702"/>
        <dbReference type="ChEBI" id="CHEBI:145989"/>
        <dbReference type="EC" id="2.5.1.19"/>
    </reaction>
    <physiologicalReaction direction="left-to-right" evidence="1">
        <dbReference type="Rhea" id="RHEA:21257"/>
    </physiologicalReaction>
</comment>
<comment type="pathway">
    <text evidence="1">Metabolic intermediate biosynthesis; chorismate biosynthesis; chorismate from D-erythrose 4-phosphate and phosphoenolpyruvate: step 6/7.</text>
</comment>
<comment type="subunit">
    <text evidence="1">Monomer.</text>
</comment>
<comment type="subcellular location">
    <subcellularLocation>
        <location evidence="1">Cytoplasm</location>
    </subcellularLocation>
</comment>
<comment type="similarity">
    <text evidence="1">Belongs to the EPSP synthase family.</text>
</comment>
<reference key="1">
    <citation type="journal article" date="2009" name="Appl. Environ. Microbiol.">
        <title>Three genomes from the phylum Acidobacteria provide insight into the lifestyles of these microorganisms in soils.</title>
        <authorList>
            <person name="Ward N.L."/>
            <person name="Challacombe J.F."/>
            <person name="Janssen P.H."/>
            <person name="Henrissat B."/>
            <person name="Coutinho P.M."/>
            <person name="Wu M."/>
            <person name="Xie G."/>
            <person name="Haft D.H."/>
            <person name="Sait M."/>
            <person name="Badger J."/>
            <person name="Barabote R.D."/>
            <person name="Bradley B."/>
            <person name="Brettin T.S."/>
            <person name="Brinkac L.M."/>
            <person name="Bruce D."/>
            <person name="Creasy T."/>
            <person name="Daugherty S.C."/>
            <person name="Davidsen T.M."/>
            <person name="DeBoy R.T."/>
            <person name="Detter J.C."/>
            <person name="Dodson R.J."/>
            <person name="Durkin A.S."/>
            <person name="Ganapathy A."/>
            <person name="Gwinn-Giglio M."/>
            <person name="Han C.S."/>
            <person name="Khouri H."/>
            <person name="Kiss H."/>
            <person name="Kothari S.P."/>
            <person name="Madupu R."/>
            <person name="Nelson K.E."/>
            <person name="Nelson W.C."/>
            <person name="Paulsen I."/>
            <person name="Penn K."/>
            <person name="Ren Q."/>
            <person name="Rosovitz M.J."/>
            <person name="Selengut J.D."/>
            <person name="Shrivastava S."/>
            <person name="Sullivan S.A."/>
            <person name="Tapia R."/>
            <person name="Thompson L.S."/>
            <person name="Watkins K.L."/>
            <person name="Yang Q."/>
            <person name="Yu C."/>
            <person name="Zafar N."/>
            <person name="Zhou L."/>
            <person name="Kuske C.R."/>
        </authorList>
    </citation>
    <scope>NUCLEOTIDE SEQUENCE [LARGE SCALE GENOMIC DNA]</scope>
    <source>
        <strain>Ellin6076</strain>
    </source>
</reference>
<dbReference type="EC" id="2.5.1.19" evidence="1"/>
<dbReference type="EMBL" id="CP000473">
    <property type="protein sequence ID" value="ABJ88244.1"/>
    <property type="molecule type" value="Genomic_DNA"/>
</dbReference>
<dbReference type="SMR" id="Q01Q26"/>
<dbReference type="FunCoup" id="Q01Q26">
    <property type="interactions" value="528"/>
</dbReference>
<dbReference type="STRING" id="234267.Acid_7333"/>
<dbReference type="KEGG" id="sus:Acid_7333"/>
<dbReference type="eggNOG" id="COG0128">
    <property type="taxonomic scope" value="Bacteria"/>
</dbReference>
<dbReference type="HOGENOM" id="CLU_024321_0_1_0"/>
<dbReference type="InParanoid" id="Q01Q26"/>
<dbReference type="OrthoDB" id="9809920at2"/>
<dbReference type="UniPathway" id="UPA00053">
    <property type="reaction ID" value="UER00089"/>
</dbReference>
<dbReference type="GO" id="GO:0005737">
    <property type="term" value="C:cytoplasm"/>
    <property type="evidence" value="ECO:0007669"/>
    <property type="project" value="UniProtKB-SubCell"/>
</dbReference>
<dbReference type="GO" id="GO:0003866">
    <property type="term" value="F:3-phosphoshikimate 1-carboxyvinyltransferase activity"/>
    <property type="evidence" value="ECO:0007669"/>
    <property type="project" value="UniProtKB-UniRule"/>
</dbReference>
<dbReference type="GO" id="GO:0008652">
    <property type="term" value="P:amino acid biosynthetic process"/>
    <property type="evidence" value="ECO:0007669"/>
    <property type="project" value="UniProtKB-KW"/>
</dbReference>
<dbReference type="GO" id="GO:0009073">
    <property type="term" value="P:aromatic amino acid family biosynthetic process"/>
    <property type="evidence" value="ECO:0007669"/>
    <property type="project" value="UniProtKB-KW"/>
</dbReference>
<dbReference type="GO" id="GO:0009423">
    <property type="term" value="P:chorismate biosynthetic process"/>
    <property type="evidence" value="ECO:0007669"/>
    <property type="project" value="UniProtKB-UniRule"/>
</dbReference>
<dbReference type="CDD" id="cd01556">
    <property type="entry name" value="EPSP_synthase"/>
    <property type="match status" value="1"/>
</dbReference>
<dbReference type="FunFam" id="3.65.10.10:FF:000005">
    <property type="entry name" value="3-phosphoshikimate 1-carboxyvinyltransferase"/>
    <property type="match status" value="1"/>
</dbReference>
<dbReference type="Gene3D" id="3.65.10.10">
    <property type="entry name" value="Enolpyruvate transferase domain"/>
    <property type="match status" value="2"/>
</dbReference>
<dbReference type="HAMAP" id="MF_00210">
    <property type="entry name" value="EPSP_synth"/>
    <property type="match status" value="1"/>
</dbReference>
<dbReference type="InterPro" id="IPR001986">
    <property type="entry name" value="Enolpyruvate_Tfrase_dom"/>
</dbReference>
<dbReference type="InterPro" id="IPR036968">
    <property type="entry name" value="Enolpyruvate_Tfrase_sf"/>
</dbReference>
<dbReference type="InterPro" id="IPR006264">
    <property type="entry name" value="EPSP_synthase"/>
</dbReference>
<dbReference type="InterPro" id="IPR023193">
    <property type="entry name" value="EPSP_synthase_CS"/>
</dbReference>
<dbReference type="InterPro" id="IPR013792">
    <property type="entry name" value="RNA3'P_cycl/enolpyr_Trfase_a/b"/>
</dbReference>
<dbReference type="NCBIfam" id="TIGR01356">
    <property type="entry name" value="aroA"/>
    <property type="match status" value="1"/>
</dbReference>
<dbReference type="PANTHER" id="PTHR21090">
    <property type="entry name" value="AROM/DEHYDROQUINATE SYNTHASE"/>
    <property type="match status" value="1"/>
</dbReference>
<dbReference type="PANTHER" id="PTHR21090:SF5">
    <property type="entry name" value="PENTAFUNCTIONAL AROM POLYPEPTIDE"/>
    <property type="match status" value="1"/>
</dbReference>
<dbReference type="Pfam" id="PF00275">
    <property type="entry name" value="EPSP_synthase"/>
    <property type="match status" value="1"/>
</dbReference>
<dbReference type="PIRSF" id="PIRSF000505">
    <property type="entry name" value="EPSPS"/>
    <property type="match status" value="1"/>
</dbReference>
<dbReference type="SUPFAM" id="SSF55205">
    <property type="entry name" value="EPT/RTPC-like"/>
    <property type="match status" value="1"/>
</dbReference>
<dbReference type="PROSITE" id="PS00885">
    <property type="entry name" value="EPSP_SYNTHASE_2"/>
    <property type="match status" value="1"/>
</dbReference>
<gene>
    <name evidence="1" type="primary">aroA</name>
    <name type="ordered locus">Acid_7333</name>
</gene>
<accession>Q01Q26</accession>
<proteinExistence type="inferred from homology"/>
<name>AROA_SOLUE</name>
<sequence length="426" mass="45186">MDKRISPAAAITGAITLPGDKSISHRYAMISSIAEGDSRILNYSTGADCHSTLGCMRALGIEITGEGTEFVVHGKGLDGLRAPAGDLDAGNSGSTIRMLSGILAAQPFTTRIFGDESLSRRPMQRIMKPLAQMGAEIRAREEKFPPLEIHGGKLRAIDYTLPVPSAQVKTCVLFAGLFAEGETTVTEPVRSRDHTEIALREFGAELTAAKGKITLTGRPRLTGRDLIVPSDISSAAFFIVAALLVRGSSLVIRGVGLNPSRSALLDLLIGMGAKIRIPQLESQNGELIGEIQVEHSALQGGVIEGGLTAAVIDEIPVLAVLGAATEEGLTIKDAGELRVKETDRIATVVENLRRLGVTAEETPDGLVIPGRQKFRAAEFDSFGDHRIAMAFAVAALRGDGESVIQNADAASVSFPEFWSTLERIAE</sequence>
<organism>
    <name type="scientific">Solibacter usitatus (strain Ellin6076)</name>
    <dbReference type="NCBI Taxonomy" id="234267"/>
    <lineage>
        <taxon>Bacteria</taxon>
        <taxon>Pseudomonadati</taxon>
        <taxon>Acidobacteriota</taxon>
        <taxon>Terriglobia</taxon>
        <taxon>Bryobacterales</taxon>
        <taxon>Solibacteraceae</taxon>
        <taxon>Candidatus Solibacter</taxon>
    </lineage>
</organism>
<feature type="chain" id="PRO_1000058618" description="3-phosphoshikimate 1-carboxyvinyltransferase">
    <location>
        <begin position="1"/>
        <end position="426"/>
    </location>
</feature>
<feature type="active site" description="Proton acceptor" evidence="1">
    <location>
        <position position="313"/>
    </location>
</feature>
<feature type="binding site" evidence="1">
    <location>
        <position position="21"/>
    </location>
    <ligand>
        <name>3-phosphoshikimate</name>
        <dbReference type="ChEBI" id="CHEBI:145989"/>
    </ligand>
</feature>
<feature type="binding site" evidence="1">
    <location>
        <position position="21"/>
    </location>
    <ligand>
        <name>phosphoenolpyruvate</name>
        <dbReference type="ChEBI" id="CHEBI:58702"/>
    </ligand>
</feature>
<feature type="binding site" evidence="1">
    <location>
        <position position="22"/>
    </location>
    <ligand>
        <name>3-phosphoshikimate</name>
        <dbReference type="ChEBI" id="CHEBI:145989"/>
    </ligand>
</feature>
<feature type="binding site" evidence="1">
    <location>
        <position position="26"/>
    </location>
    <ligand>
        <name>3-phosphoshikimate</name>
        <dbReference type="ChEBI" id="CHEBI:145989"/>
    </ligand>
</feature>
<feature type="binding site" evidence="1">
    <location>
        <position position="93"/>
    </location>
    <ligand>
        <name>phosphoenolpyruvate</name>
        <dbReference type="ChEBI" id="CHEBI:58702"/>
    </ligand>
</feature>
<feature type="binding site" evidence="1">
    <location>
        <position position="121"/>
    </location>
    <ligand>
        <name>phosphoenolpyruvate</name>
        <dbReference type="ChEBI" id="CHEBI:58702"/>
    </ligand>
</feature>
<feature type="binding site" evidence="1">
    <location>
        <position position="165"/>
    </location>
    <ligand>
        <name>3-phosphoshikimate</name>
        <dbReference type="ChEBI" id="CHEBI:145989"/>
    </ligand>
</feature>
<feature type="binding site" evidence="1">
    <location>
        <position position="167"/>
    </location>
    <ligand>
        <name>3-phosphoshikimate</name>
        <dbReference type="ChEBI" id="CHEBI:145989"/>
    </ligand>
</feature>
<feature type="binding site" evidence="1">
    <location>
        <position position="167"/>
    </location>
    <ligand>
        <name>phosphoenolpyruvate</name>
        <dbReference type="ChEBI" id="CHEBI:58702"/>
    </ligand>
</feature>
<feature type="binding site" evidence="1">
    <location>
        <position position="313"/>
    </location>
    <ligand>
        <name>3-phosphoshikimate</name>
        <dbReference type="ChEBI" id="CHEBI:145989"/>
    </ligand>
</feature>
<feature type="binding site" evidence="1">
    <location>
        <position position="340"/>
    </location>
    <ligand>
        <name>3-phosphoshikimate</name>
        <dbReference type="ChEBI" id="CHEBI:145989"/>
    </ligand>
</feature>
<feature type="binding site" evidence="1">
    <location>
        <position position="344"/>
    </location>
    <ligand>
        <name>phosphoenolpyruvate</name>
        <dbReference type="ChEBI" id="CHEBI:58702"/>
    </ligand>
</feature>
<feature type="binding site" evidence="1">
    <location>
        <position position="386"/>
    </location>
    <ligand>
        <name>phosphoenolpyruvate</name>
        <dbReference type="ChEBI" id="CHEBI:58702"/>
    </ligand>
</feature>
<keyword id="KW-0028">Amino-acid biosynthesis</keyword>
<keyword id="KW-0057">Aromatic amino acid biosynthesis</keyword>
<keyword id="KW-0963">Cytoplasm</keyword>
<keyword id="KW-0808">Transferase</keyword>
<protein>
    <recommendedName>
        <fullName evidence="1">3-phosphoshikimate 1-carboxyvinyltransferase</fullName>
        <ecNumber evidence="1">2.5.1.19</ecNumber>
    </recommendedName>
    <alternativeName>
        <fullName evidence="1">5-enolpyruvylshikimate-3-phosphate synthase</fullName>
        <shortName evidence="1">EPSP synthase</shortName>
        <shortName evidence="1">EPSPS</shortName>
    </alternativeName>
</protein>